<name>A4_PANTR</name>
<gene>
    <name evidence="2" type="primary">APP</name>
    <name evidence="2" type="synonym">A4</name>
    <name evidence="2" type="synonym">AD1</name>
</gene>
<evidence type="ECO:0000250" key="1"/>
<evidence type="ECO:0000250" key="2">
    <source>
        <dbReference type="UniProtKB" id="P05067"/>
    </source>
</evidence>
<evidence type="ECO:0000250" key="3">
    <source>
        <dbReference type="UniProtKB" id="P08592"/>
    </source>
</evidence>
<evidence type="ECO:0000250" key="4">
    <source>
        <dbReference type="UniProtKB" id="P12023"/>
    </source>
</evidence>
<evidence type="ECO:0000255" key="5"/>
<evidence type="ECO:0000255" key="6">
    <source>
        <dbReference type="PROSITE-ProRule" id="PRU00031"/>
    </source>
</evidence>
<evidence type="ECO:0000255" key="7">
    <source>
        <dbReference type="PROSITE-ProRule" id="PRU01217"/>
    </source>
</evidence>
<evidence type="ECO:0000255" key="8">
    <source>
        <dbReference type="PROSITE-ProRule" id="PRU01218"/>
    </source>
</evidence>
<evidence type="ECO:0000256" key="9">
    <source>
        <dbReference type="SAM" id="MobiDB-lite"/>
    </source>
</evidence>
<evidence type="ECO:0000305" key="10"/>
<dbReference type="EMBL" id="AY665248">
    <property type="protein sequence ID" value="AAV74286.1"/>
    <property type="molecule type" value="mRNA"/>
</dbReference>
<dbReference type="RefSeq" id="NP_001013036.1">
    <property type="nucleotide sequence ID" value="NM_001013018.1"/>
</dbReference>
<dbReference type="SMR" id="Q5IS80"/>
<dbReference type="FunCoup" id="Q5IS80">
    <property type="interactions" value="1737"/>
</dbReference>
<dbReference type="STRING" id="9598.ENSPTRP00000093932"/>
<dbReference type="MEROPS" id="I02.015"/>
<dbReference type="GlyCosmos" id="Q5IS80">
    <property type="glycosylation" value="2 sites, No reported glycans"/>
</dbReference>
<dbReference type="PaxDb" id="9598-ENSPTRP00000023795"/>
<dbReference type="GeneID" id="473931"/>
<dbReference type="KEGG" id="ptr:473931"/>
<dbReference type="CTD" id="351"/>
<dbReference type="eggNOG" id="KOG3540">
    <property type="taxonomic scope" value="Eukaryota"/>
</dbReference>
<dbReference type="HOGENOM" id="CLU_014607_2_1_1"/>
<dbReference type="InParanoid" id="Q5IS80"/>
<dbReference type="OrthoDB" id="11515at9604"/>
<dbReference type="TreeFam" id="TF317274"/>
<dbReference type="Proteomes" id="UP000002277">
    <property type="component" value="Unplaced"/>
</dbReference>
<dbReference type="GO" id="GO:0030424">
    <property type="term" value="C:axon"/>
    <property type="evidence" value="ECO:0000250"/>
    <property type="project" value="UniProtKB"/>
</dbReference>
<dbReference type="GO" id="GO:0009986">
    <property type="term" value="C:cell surface"/>
    <property type="evidence" value="ECO:0000318"/>
    <property type="project" value="GO_Central"/>
</dbReference>
<dbReference type="GO" id="GO:0005905">
    <property type="term" value="C:clathrin-coated pit"/>
    <property type="evidence" value="ECO:0007669"/>
    <property type="project" value="UniProtKB-SubCell"/>
</dbReference>
<dbReference type="GO" id="GO:0005737">
    <property type="term" value="C:cytoplasm"/>
    <property type="evidence" value="ECO:0000250"/>
    <property type="project" value="UniProtKB"/>
</dbReference>
<dbReference type="GO" id="GO:0005769">
    <property type="term" value="C:early endosome"/>
    <property type="evidence" value="ECO:0000250"/>
    <property type="project" value="UniProtKB"/>
</dbReference>
<dbReference type="GO" id="GO:0005783">
    <property type="term" value="C:endoplasmic reticulum"/>
    <property type="evidence" value="ECO:0000250"/>
    <property type="project" value="UniProtKB"/>
</dbReference>
<dbReference type="GO" id="GO:0005576">
    <property type="term" value="C:extracellular region"/>
    <property type="evidence" value="ECO:0007669"/>
    <property type="project" value="UniProtKB-SubCell"/>
</dbReference>
<dbReference type="GO" id="GO:0005794">
    <property type="term" value="C:Golgi apparatus"/>
    <property type="evidence" value="ECO:0000250"/>
    <property type="project" value="UniProtKB"/>
</dbReference>
<dbReference type="GO" id="GO:0005798">
    <property type="term" value="C:Golgi-associated vesicle"/>
    <property type="evidence" value="ECO:0000250"/>
    <property type="project" value="UniProtKB"/>
</dbReference>
<dbReference type="GO" id="GO:0030426">
    <property type="term" value="C:growth cone"/>
    <property type="evidence" value="ECO:0007669"/>
    <property type="project" value="UniProtKB-SubCell"/>
</dbReference>
<dbReference type="GO" id="GO:0016020">
    <property type="term" value="C:membrane"/>
    <property type="evidence" value="ECO:0000250"/>
    <property type="project" value="UniProtKB"/>
</dbReference>
<dbReference type="GO" id="GO:0045121">
    <property type="term" value="C:membrane raft"/>
    <property type="evidence" value="ECO:0000318"/>
    <property type="project" value="GO_Central"/>
</dbReference>
<dbReference type="GO" id="GO:0005634">
    <property type="term" value="C:nucleus"/>
    <property type="evidence" value="ECO:0007669"/>
    <property type="project" value="UniProtKB-SubCell"/>
</dbReference>
<dbReference type="GO" id="GO:0043204">
    <property type="term" value="C:perikaryon"/>
    <property type="evidence" value="ECO:0007669"/>
    <property type="project" value="UniProtKB-SubCell"/>
</dbReference>
<dbReference type="GO" id="GO:0005886">
    <property type="term" value="C:plasma membrane"/>
    <property type="evidence" value="ECO:0000318"/>
    <property type="project" value="GO_Central"/>
</dbReference>
<dbReference type="GO" id="GO:0055037">
    <property type="term" value="C:recycling endosome"/>
    <property type="evidence" value="ECO:0000250"/>
    <property type="project" value="UniProtKB"/>
</dbReference>
<dbReference type="GO" id="GO:0003677">
    <property type="term" value="F:DNA binding"/>
    <property type="evidence" value="ECO:0000250"/>
    <property type="project" value="UniProtKB"/>
</dbReference>
<dbReference type="GO" id="GO:0008201">
    <property type="term" value="F:heparin binding"/>
    <property type="evidence" value="ECO:0007669"/>
    <property type="project" value="UniProtKB-KW"/>
</dbReference>
<dbReference type="GO" id="GO:0004867">
    <property type="term" value="F:serine-type endopeptidase inhibitor activity"/>
    <property type="evidence" value="ECO:0007669"/>
    <property type="project" value="UniProtKB-KW"/>
</dbReference>
<dbReference type="GO" id="GO:0030546">
    <property type="term" value="F:signaling receptor activator activity"/>
    <property type="evidence" value="ECO:0000318"/>
    <property type="project" value="GO_Central"/>
</dbReference>
<dbReference type="GO" id="GO:0005102">
    <property type="term" value="F:signaling receptor binding"/>
    <property type="evidence" value="ECO:0000318"/>
    <property type="project" value="GO_Central"/>
</dbReference>
<dbReference type="GO" id="GO:0046914">
    <property type="term" value="F:transition metal ion binding"/>
    <property type="evidence" value="ECO:0007669"/>
    <property type="project" value="InterPro"/>
</dbReference>
<dbReference type="GO" id="GO:0008344">
    <property type="term" value="P:adult locomotory behavior"/>
    <property type="evidence" value="ECO:0000250"/>
    <property type="project" value="UniProtKB"/>
</dbReference>
<dbReference type="GO" id="GO:0006915">
    <property type="term" value="P:apoptotic process"/>
    <property type="evidence" value="ECO:0007669"/>
    <property type="project" value="UniProtKB-KW"/>
</dbReference>
<dbReference type="GO" id="GO:0008088">
    <property type="term" value="P:axo-dendritic transport"/>
    <property type="evidence" value="ECO:0000250"/>
    <property type="project" value="UniProtKB"/>
</dbReference>
<dbReference type="GO" id="GO:0016199">
    <property type="term" value="P:axon midline choice point recognition"/>
    <property type="evidence" value="ECO:0000250"/>
    <property type="project" value="UniProtKB"/>
</dbReference>
<dbReference type="GO" id="GO:0007409">
    <property type="term" value="P:axonogenesis"/>
    <property type="evidence" value="ECO:0000250"/>
    <property type="project" value="UniProtKB"/>
</dbReference>
<dbReference type="GO" id="GO:0007155">
    <property type="term" value="P:cell adhesion"/>
    <property type="evidence" value="ECO:0007669"/>
    <property type="project" value="UniProtKB-KW"/>
</dbReference>
<dbReference type="GO" id="GO:0007417">
    <property type="term" value="P:central nervous system development"/>
    <property type="evidence" value="ECO:0000318"/>
    <property type="project" value="GO_Central"/>
</dbReference>
<dbReference type="GO" id="GO:0050890">
    <property type="term" value="P:cognition"/>
    <property type="evidence" value="ECO:0000250"/>
    <property type="project" value="UniProtKB"/>
</dbReference>
<dbReference type="GO" id="GO:0048669">
    <property type="term" value="P:collateral sprouting in absence of injury"/>
    <property type="evidence" value="ECO:0000250"/>
    <property type="project" value="UniProtKB"/>
</dbReference>
<dbReference type="GO" id="GO:0016358">
    <property type="term" value="P:dendrite development"/>
    <property type="evidence" value="ECO:0000250"/>
    <property type="project" value="UniProtKB"/>
</dbReference>
<dbReference type="GO" id="GO:0006897">
    <property type="term" value="P:endocytosis"/>
    <property type="evidence" value="ECO:0000250"/>
    <property type="project" value="UniProtKB"/>
</dbReference>
<dbReference type="GO" id="GO:0030198">
    <property type="term" value="P:extracellular matrix organization"/>
    <property type="evidence" value="ECO:0000250"/>
    <property type="project" value="UniProtKB"/>
</dbReference>
<dbReference type="GO" id="GO:0006878">
    <property type="term" value="P:intracellular copper ion homeostasis"/>
    <property type="evidence" value="ECO:0000250"/>
    <property type="project" value="UniProtKB"/>
</dbReference>
<dbReference type="GO" id="GO:0035235">
    <property type="term" value="P:ionotropic glutamate receptor signaling pathway"/>
    <property type="evidence" value="ECO:0000250"/>
    <property type="project" value="UniProtKB"/>
</dbReference>
<dbReference type="GO" id="GO:0007626">
    <property type="term" value="P:locomotory behavior"/>
    <property type="evidence" value="ECO:0000250"/>
    <property type="project" value="UniProtKB"/>
</dbReference>
<dbReference type="GO" id="GO:0007617">
    <property type="term" value="P:mating behavior"/>
    <property type="evidence" value="ECO:0000250"/>
    <property type="project" value="UniProtKB"/>
</dbReference>
<dbReference type="GO" id="GO:0031175">
    <property type="term" value="P:neuron projection development"/>
    <property type="evidence" value="ECO:0000250"/>
    <property type="project" value="UniProtKB"/>
</dbReference>
<dbReference type="GO" id="GO:0016322">
    <property type="term" value="P:neuron remodeling"/>
    <property type="evidence" value="ECO:0000250"/>
    <property type="project" value="UniProtKB"/>
</dbReference>
<dbReference type="GO" id="GO:0007219">
    <property type="term" value="P:Notch signaling pathway"/>
    <property type="evidence" value="ECO:0007669"/>
    <property type="project" value="UniProtKB-KW"/>
</dbReference>
<dbReference type="GO" id="GO:0045931">
    <property type="term" value="P:positive regulation of mitotic cell cycle"/>
    <property type="evidence" value="ECO:0000250"/>
    <property type="project" value="UniProtKB"/>
</dbReference>
<dbReference type="GO" id="GO:0040014">
    <property type="term" value="P:regulation of multicellular organism growth"/>
    <property type="evidence" value="ECO:0000250"/>
    <property type="project" value="UniProtKB"/>
</dbReference>
<dbReference type="GO" id="GO:0050803">
    <property type="term" value="P:regulation of synapse structure or activity"/>
    <property type="evidence" value="ECO:0000250"/>
    <property type="project" value="UniProtKB"/>
</dbReference>
<dbReference type="GO" id="GO:0006417">
    <property type="term" value="P:regulation of translation"/>
    <property type="evidence" value="ECO:0000250"/>
    <property type="project" value="UniProtKB"/>
</dbReference>
<dbReference type="GO" id="GO:0008542">
    <property type="term" value="P:visual learning"/>
    <property type="evidence" value="ECO:0000250"/>
    <property type="project" value="UniProtKB"/>
</dbReference>
<dbReference type="CDD" id="cd22607">
    <property type="entry name" value="Kunitz_ABPP-like"/>
    <property type="match status" value="1"/>
</dbReference>
<dbReference type="FunFam" id="3.30.1490.140:FF:000001">
    <property type="entry name" value="Amyloid beta (A4) protein b"/>
    <property type="match status" value="1"/>
</dbReference>
<dbReference type="FunFam" id="3.90.570.10:FF:000001">
    <property type="entry name" value="Amyloid beta A4 protein"/>
    <property type="match status" value="1"/>
</dbReference>
<dbReference type="FunFam" id="4.10.230.10:FF:000001">
    <property type="entry name" value="Amyloid beta A4 protein"/>
    <property type="match status" value="1"/>
</dbReference>
<dbReference type="FunFam" id="4.10.410.10:FF:000001">
    <property type="entry name" value="Amyloid beta A4 protein"/>
    <property type="match status" value="1"/>
</dbReference>
<dbReference type="FunFam" id="1.20.120.770:FF:000001">
    <property type="entry name" value="Amyloid beta A4 protein-like isoform 1"/>
    <property type="match status" value="1"/>
</dbReference>
<dbReference type="Gene3D" id="1.20.120.770">
    <property type="entry name" value="Amyloid precursor protein, E2 domain"/>
    <property type="match status" value="1"/>
</dbReference>
<dbReference type="Gene3D" id="4.10.230.10">
    <property type="entry name" value="Amyloidogenic glycoprotein, amyloid-beta peptide"/>
    <property type="match status" value="1"/>
</dbReference>
<dbReference type="Gene3D" id="3.30.1490.140">
    <property type="entry name" value="Amyloidogenic glycoprotein, copper-binding domain"/>
    <property type="match status" value="1"/>
</dbReference>
<dbReference type="Gene3D" id="3.90.570.10">
    <property type="entry name" value="Amyloidogenic glycoprotein, heparin-binding domain"/>
    <property type="match status" value="1"/>
</dbReference>
<dbReference type="Gene3D" id="4.10.410.10">
    <property type="entry name" value="Pancreatic trypsin inhibitor Kunitz domain"/>
    <property type="match status" value="1"/>
</dbReference>
<dbReference type="Gene3D" id="2.30.29.30">
    <property type="entry name" value="Pleckstrin-homology domain (PH domain)/Phosphotyrosine-binding domain (PTB)"/>
    <property type="match status" value="1"/>
</dbReference>
<dbReference type="InterPro" id="IPR036669">
    <property type="entry name" value="Amyloid_Cu-bd_sf"/>
</dbReference>
<dbReference type="InterPro" id="IPR008155">
    <property type="entry name" value="Amyloid_glyco"/>
</dbReference>
<dbReference type="InterPro" id="IPR013803">
    <property type="entry name" value="Amyloid_glyco_Abeta"/>
</dbReference>
<dbReference type="InterPro" id="IPR037071">
    <property type="entry name" value="Amyloid_glyco_Abeta_sf"/>
</dbReference>
<dbReference type="InterPro" id="IPR011178">
    <property type="entry name" value="Amyloid_glyco_Cu-bd"/>
</dbReference>
<dbReference type="InterPro" id="IPR024329">
    <property type="entry name" value="Amyloid_glyco_E2_domain"/>
</dbReference>
<dbReference type="InterPro" id="IPR008154">
    <property type="entry name" value="Amyloid_glyco_extra"/>
</dbReference>
<dbReference type="InterPro" id="IPR015849">
    <property type="entry name" value="Amyloid_glyco_heparin-bd"/>
</dbReference>
<dbReference type="InterPro" id="IPR036454">
    <property type="entry name" value="Amyloid_glyco_heparin-bd_sf"/>
</dbReference>
<dbReference type="InterPro" id="IPR019745">
    <property type="entry name" value="Amyloid_glyco_intracell_CS"/>
</dbReference>
<dbReference type="InterPro" id="IPR019543">
    <property type="entry name" value="APP_amyloid_C"/>
</dbReference>
<dbReference type="InterPro" id="IPR019744">
    <property type="entry name" value="APP_CUBD_CS"/>
</dbReference>
<dbReference type="InterPro" id="IPR036176">
    <property type="entry name" value="E2_sf"/>
</dbReference>
<dbReference type="InterPro" id="IPR002223">
    <property type="entry name" value="Kunitz_BPTI"/>
</dbReference>
<dbReference type="InterPro" id="IPR036880">
    <property type="entry name" value="Kunitz_BPTI_sf"/>
</dbReference>
<dbReference type="InterPro" id="IPR011993">
    <property type="entry name" value="PH-like_dom_sf"/>
</dbReference>
<dbReference type="InterPro" id="IPR020901">
    <property type="entry name" value="Prtase_inh_Kunz-CS"/>
</dbReference>
<dbReference type="PANTHER" id="PTHR23103">
    <property type="entry name" value="ALZHEIMER'S DISEASE BETA-AMYLOID RELATED"/>
    <property type="match status" value="1"/>
</dbReference>
<dbReference type="PANTHER" id="PTHR23103:SF7">
    <property type="entry name" value="AMYLOID-BETA PRECURSOR PROTEIN"/>
    <property type="match status" value="1"/>
</dbReference>
<dbReference type="Pfam" id="PF10515">
    <property type="entry name" value="APP_amyloid"/>
    <property type="match status" value="1"/>
</dbReference>
<dbReference type="Pfam" id="PF12924">
    <property type="entry name" value="APP_Cu_bd"/>
    <property type="match status" value="1"/>
</dbReference>
<dbReference type="Pfam" id="PF12925">
    <property type="entry name" value="APP_E2"/>
    <property type="match status" value="1"/>
</dbReference>
<dbReference type="Pfam" id="PF02177">
    <property type="entry name" value="APP_N"/>
    <property type="match status" value="1"/>
</dbReference>
<dbReference type="Pfam" id="PF03494">
    <property type="entry name" value="Beta-APP"/>
    <property type="match status" value="1"/>
</dbReference>
<dbReference type="Pfam" id="PF00014">
    <property type="entry name" value="Kunitz_BPTI"/>
    <property type="match status" value="1"/>
</dbReference>
<dbReference type="PRINTS" id="PR00203">
    <property type="entry name" value="AMYLOIDA4"/>
</dbReference>
<dbReference type="PRINTS" id="PR00759">
    <property type="entry name" value="BASICPTASE"/>
</dbReference>
<dbReference type="PRINTS" id="PR00204">
    <property type="entry name" value="BETAAMYLOID"/>
</dbReference>
<dbReference type="SMART" id="SM00006">
    <property type="entry name" value="A4_EXTRA"/>
    <property type="match status" value="1"/>
</dbReference>
<dbReference type="SMART" id="SM00131">
    <property type="entry name" value="KU"/>
    <property type="match status" value="1"/>
</dbReference>
<dbReference type="SUPFAM" id="SSF56491">
    <property type="entry name" value="A heparin-binding domain"/>
    <property type="match status" value="1"/>
</dbReference>
<dbReference type="SUPFAM" id="SSF89811">
    <property type="entry name" value="Amyloid beta a4 protein copper binding domain (domain 2)"/>
    <property type="match status" value="1"/>
</dbReference>
<dbReference type="SUPFAM" id="SSF57362">
    <property type="entry name" value="BPTI-like"/>
    <property type="match status" value="1"/>
</dbReference>
<dbReference type="SUPFAM" id="SSF109843">
    <property type="entry name" value="CAPPD, an extracellular domain of amyloid beta A4 protein"/>
    <property type="match status" value="1"/>
</dbReference>
<dbReference type="PROSITE" id="PS00319">
    <property type="entry name" value="APP_CUBD"/>
    <property type="match status" value="1"/>
</dbReference>
<dbReference type="PROSITE" id="PS51869">
    <property type="entry name" value="APP_E1"/>
    <property type="match status" value="1"/>
</dbReference>
<dbReference type="PROSITE" id="PS51870">
    <property type="entry name" value="APP_E2"/>
    <property type="match status" value="1"/>
</dbReference>
<dbReference type="PROSITE" id="PS00320">
    <property type="entry name" value="APP_INTRA"/>
    <property type="match status" value="1"/>
</dbReference>
<dbReference type="PROSITE" id="PS00280">
    <property type="entry name" value="BPTI_KUNITZ_1"/>
    <property type="match status" value="1"/>
</dbReference>
<dbReference type="PROSITE" id="PS50279">
    <property type="entry name" value="BPTI_KUNITZ_2"/>
    <property type="match status" value="1"/>
</dbReference>
<organism>
    <name type="scientific">Pan troglodytes</name>
    <name type="common">Chimpanzee</name>
    <dbReference type="NCBI Taxonomy" id="9598"/>
    <lineage>
        <taxon>Eukaryota</taxon>
        <taxon>Metazoa</taxon>
        <taxon>Chordata</taxon>
        <taxon>Craniata</taxon>
        <taxon>Vertebrata</taxon>
        <taxon>Euteleostomi</taxon>
        <taxon>Mammalia</taxon>
        <taxon>Eutheria</taxon>
        <taxon>Euarchontoglires</taxon>
        <taxon>Primates</taxon>
        <taxon>Haplorrhini</taxon>
        <taxon>Catarrhini</taxon>
        <taxon>Hominidae</taxon>
        <taxon>Pan</taxon>
    </lineage>
</organism>
<protein>
    <recommendedName>
        <fullName evidence="2">Amyloid-beta precursor protein</fullName>
    </recommendedName>
    <alternativeName>
        <fullName>ABPP</fullName>
        <shortName>APP</shortName>
    </alternativeName>
    <alternativeName>
        <fullName>Alzheimer disease amyloid A4 protein homolog</fullName>
    </alternativeName>
    <alternativeName>
        <fullName>Alzheimer disease amyloid protein</fullName>
    </alternativeName>
    <alternativeName>
        <fullName evidence="10">Amyloid precursor protein</fullName>
    </alternativeName>
    <alternativeName>
        <fullName evidence="3">Amyloid-beta (A4) precursor protein</fullName>
    </alternativeName>
    <alternativeName>
        <fullName evidence="3">Amyloid-beta A4 protein</fullName>
    </alternativeName>
    <component>
        <recommendedName>
            <fullName>N-APP</fullName>
        </recommendedName>
    </component>
    <component>
        <recommendedName>
            <fullName>Soluble APP-alpha</fullName>
            <shortName>S-APP-alpha</shortName>
        </recommendedName>
    </component>
    <component>
        <recommendedName>
            <fullName>Soluble APP-beta</fullName>
            <shortName>S-APP-beta</shortName>
        </recommendedName>
    </component>
    <component>
        <recommendedName>
            <fullName>C99</fullName>
        </recommendedName>
        <alternativeName>
            <fullName>Beta-secretase C-terminal fragment</fullName>
            <shortName>Beta-CTF</shortName>
        </alternativeName>
    </component>
    <component>
        <recommendedName>
            <fullName>Amyloid-beta protein 42</fullName>
            <shortName>Abeta42</shortName>
        </recommendedName>
        <alternativeName>
            <fullName>Beta-APP42</fullName>
        </alternativeName>
    </component>
    <component>
        <recommendedName>
            <fullName>Amyloid-beta protein 40</fullName>
            <shortName>Abeta40</shortName>
        </recommendedName>
        <alternativeName>
            <fullName>Beta-APP40</fullName>
        </alternativeName>
    </component>
    <component>
        <recommendedName>
            <fullName>C83</fullName>
        </recommendedName>
        <alternativeName>
            <fullName>Alpha-secretase C-terminal fragment</fullName>
            <shortName>Alpha-CTF</shortName>
        </alternativeName>
    </component>
    <component>
        <recommendedName>
            <fullName>P3(42)</fullName>
        </recommendedName>
    </component>
    <component>
        <recommendedName>
            <fullName>P3(40)</fullName>
        </recommendedName>
    </component>
    <component>
        <recommendedName>
            <fullName>C80</fullName>
        </recommendedName>
    </component>
    <component>
        <recommendedName>
            <fullName>Gamma-secretase C-terminal fragment 59</fullName>
        </recommendedName>
        <alternativeName>
            <fullName>Gamma-CTF(59)</fullName>
        </alternativeName>
    </component>
    <component>
        <recommendedName>
            <fullName>Gamma-secretase C-terminal fragment 57</fullName>
        </recommendedName>
        <alternativeName>
            <fullName>Gamma-CTF(57)</fullName>
        </alternativeName>
    </component>
    <component>
        <recommendedName>
            <fullName>Gamma-secretase C-terminal fragment 50</fullName>
        </recommendedName>
        <alternativeName>
            <fullName>Gamma-CTF(50)</fullName>
        </alternativeName>
    </component>
    <component>
        <recommendedName>
            <fullName>C31</fullName>
        </recommendedName>
    </component>
</protein>
<feature type="signal peptide" evidence="2">
    <location>
        <begin position="1"/>
        <end position="17"/>
    </location>
</feature>
<feature type="chain" id="PRO_0000000127" description="Amyloid-beta precursor protein">
    <location>
        <begin position="18"/>
        <end position="770"/>
    </location>
</feature>
<feature type="chain" id="PRO_0000000128" description="Soluble APP-alpha" evidence="5">
    <location>
        <begin position="18"/>
        <end position="687"/>
    </location>
</feature>
<feature type="chain" id="PRO_0000000129" description="Soluble APP-beta" evidence="5">
    <location>
        <begin position="18"/>
        <end position="671"/>
    </location>
</feature>
<feature type="chain" id="PRO_0000381969" description="N-APP" evidence="1">
    <location>
        <begin position="18"/>
        <end position="286"/>
    </location>
</feature>
<feature type="chain" id="PRO_0000000130" description="C99" evidence="5">
    <location>
        <begin position="672"/>
        <end position="770"/>
    </location>
</feature>
<feature type="chain" id="PRO_0000000131" description="Amyloid-beta protein 42" evidence="2">
    <location>
        <begin position="672"/>
        <end position="713"/>
    </location>
</feature>
<feature type="chain" id="PRO_0000000132" description="Amyloid-beta protein 40" evidence="2">
    <location>
        <begin position="672"/>
        <end position="711"/>
    </location>
</feature>
<feature type="chain" id="PRO_0000000133" description="C83" evidence="5">
    <location>
        <begin position="688"/>
        <end position="770"/>
    </location>
</feature>
<feature type="peptide" id="PRO_0000000134" description="P3(42)" evidence="5">
    <location>
        <begin position="688"/>
        <end position="713"/>
    </location>
</feature>
<feature type="peptide" id="PRO_0000000135" description="P3(40)" evidence="5">
    <location>
        <begin position="688"/>
        <end position="711"/>
    </location>
</feature>
<feature type="chain" id="PRO_0000384577" description="C80">
    <location>
        <begin position="691"/>
        <end position="770"/>
    </location>
</feature>
<feature type="chain" id="PRO_0000000136" description="Gamma-secretase C-terminal fragment 59" evidence="5">
    <location>
        <begin position="712"/>
        <end position="770"/>
    </location>
</feature>
<feature type="chain" id="PRO_0000000137" description="Gamma-secretase C-terminal fragment 57" evidence="5">
    <location>
        <begin position="714"/>
        <end position="770"/>
    </location>
</feature>
<feature type="chain" id="PRO_0000000138" description="Gamma-secretase C-terminal fragment 50" evidence="5">
    <location>
        <begin position="721"/>
        <end position="770"/>
    </location>
</feature>
<feature type="chain" id="PRO_0000000139" description="C31" evidence="5">
    <location>
        <begin position="740"/>
        <end position="770"/>
    </location>
</feature>
<feature type="topological domain" description="Extracellular" evidence="10">
    <location>
        <begin position="18"/>
        <end position="701"/>
    </location>
</feature>
<feature type="transmembrane region" description="Helical" evidence="2">
    <location>
        <begin position="702"/>
        <end position="722"/>
    </location>
</feature>
<feature type="topological domain" description="Cytoplasmic" evidence="10">
    <location>
        <begin position="723"/>
        <end position="770"/>
    </location>
</feature>
<feature type="domain" description="E1" evidence="7">
    <location>
        <begin position="28"/>
        <end position="189"/>
    </location>
</feature>
<feature type="domain" description="BPTI/Kunitz inhibitor" evidence="6">
    <location>
        <begin position="291"/>
        <end position="341"/>
    </location>
</feature>
<feature type="domain" description="E2" evidence="8">
    <location>
        <begin position="374"/>
        <end position="565"/>
    </location>
</feature>
<feature type="region of interest" description="GFLD subdomain" evidence="7">
    <location>
        <begin position="28"/>
        <end position="123"/>
    </location>
</feature>
<feature type="region of interest" description="CuBD subdomain" evidence="7">
    <location>
        <begin position="131"/>
        <end position="189"/>
    </location>
</feature>
<feature type="region of interest" description="Zinc-binding" evidence="1">
    <location>
        <begin position="181"/>
        <end position="188"/>
    </location>
</feature>
<feature type="region of interest" description="Disordered" evidence="9">
    <location>
        <begin position="194"/>
        <end position="284"/>
    </location>
</feature>
<feature type="region of interest" description="Heparin-binding" evidence="1">
    <location>
        <begin position="391"/>
        <end position="423"/>
    </location>
</feature>
<feature type="region of interest" description="Heparin-binding" evidence="1">
    <location>
        <begin position="491"/>
        <end position="522"/>
    </location>
</feature>
<feature type="region of interest" description="Collagen-binding" evidence="2">
    <location>
        <begin position="523"/>
        <end position="540"/>
    </location>
</feature>
<feature type="region of interest" description="Interaction with PSEN1" evidence="2">
    <location>
        <begin position="695"/>
        <end position="722"/>
    </location>
</feature>
<feature type="region of interest" description="Interaction with G(o)-alpha" evidence="1">
    <location>
        <begin position="732"/>
        <end position="751"/>
    </location>
</feature>
<feature type="region of interest" description="Required for the interaction with KIF5B and for anterograde transport in axons" evidence="2">
    <location>
        <begin position="756"/>
        <end position="770"/>
    </location>
</feature>
<feature type="short sequence motif" description="OX-2" evidence="2">
    <location>
        <begin position="344"/>
        <end position="365"/>
    </location>
</feature>
<feature type="short sequence motif" description="Basolateral sorting signal" evidence="1">
    <location>
        <begin position="724"/>
        <end position="734"/>
    </location>
</feature>
<feature type="short sequence motif" description="YENPXY motif; contains endocytosis signal" evidence="2">
    <location>
        <begin position="757"/>
        <end position="762"/>
    </location>
</feature>
<feature type="compositionally biased region" description="Acidic residues" evidence="9">
    <location>
        <begin position="194"/>
        <end position="207"/>
    </location>
</feature>
<feature type="compositionally biased region" description="Acidic residues" evidence="9">
    <location>
        <begin position="228"/>
        <end position="264"/>
    </location>
</feature>
<feature type="compositionally biased region" description="Low complexity" evidence="9">
    <location>
        <begin position="268"/>
        <end position="281"/>
    </location>
</feature>
<feature type="binding site" evidence="2">
    <location>
        <begin position="96"/>
        <end position="110"/>
    </location>
    <ligand>
        <name>heparin</name>
        <dbReference type="ChEBI" id="CHEBI:28304"/>
    </ligand>
</feature>
<feature type="binding site" evidence="7">
    <location>
        <position position="147"/>
    </location>
    <ligand>
        <name>Cu(2+)</name>
        <dbReference type="ChEBI" id="CHEBI:29036"/>
        <label>1</label>
    </ligand>
</feature>
<feature type="binding site" evidence="7">
    <location>
        <position position="151"/>
    </location>
    <ligand>
        <name>Cu(2+)</name>
        <dbReference type="ChEBI" id="CHEBI:29036"/>
        <label>1</label>
    </ligand>
</feature>
<feature type="binding site" evidence="7">
    <location>
        <position position="168"/>
    </location>
    <ligand>
        <name>Cu(2+)</name>
        <dbReference type="ChEBI" id="CHEBI:29036"/>
        <label>1</label>
    </ligand>
</feature>
<feature type="binding site" evidence="2">
    <location>
        <position position="183"/>
    </location>
    <ligand>
        <name>Zn(2+)</name>
        <dbReference type="ChEBI" id="CHEBI:29105"/>
        <label>1</label>
    </ligand>
</feature>
<feature type="binding site" evidence="2">
    <location>
        <position position="186"/>
    </location>
    <ligand>
        <name>Zn(2+)</name>
        <dbReference type="ChEBI" id="CHEBI:29105"/>
        <label>1</label>
    </ligand>
</feature>
<feature type="binding site" evidence="2">
    <location>
        <position position="187"/>
    </location>
    <ligand>
        <name>Zn(2+)</name>
        <dbReference type="ChEBI" id="CHEBI:29105"/>
        <label>1</label>
    </ligand>
</feature>
<feature type="binding site" evidence="2">
    <location>
        <position position="677"/>
    </location>
    <ligand>
        <name>Cu(2+)</name>
        <dbReference type="ChEBI" id="CHEBI:29036"/>
        <label>2</label>
    </ligand>
</feature>
<feature type="binding site" evidence="2">
    <location>
        <position position="677"/>
    </location>
    <ligand>
        <name>Zn(2+)</name>
        <dbReference type="ChEBI" id="CHEBI:29105"/>
        <label>2</label>
    </ligand>
</feature>
<feature type="binding site" evidence="2">
    <location>
        <position position="681"/>
    </location>
    <ligand>
        <name>Cu(2+)</name>
        <dbReference type="ChEBI" id="CHEBI:29036"/>
        <label>2</label>
    </ligand>
</feature>
<feature type="binding site" evidence="2">
    <location>
        <position position="681"/>
    </location>
    <ligand>
        <name>Zn(2+)</name>
        <dbReference type="ChEBI" id="CHEBI:29105"/>
        <label>2</label>
    </ligand>
</feature>
<feature type="binding site" evidence="2">
    <location>
        <position position="684"/>
    </location>
    <ligand>
        <name>Cu(2+)</name>
        <dbReference type="ChEBI" id="CHEBI:29036"/>
        <label>2</label>
    </ligand>
</feature>
<feature type="binding site" evidence="2">
    <location>
        <position position="684"/>
    </location>
    <ligand>
        <name>Zn(2+)</name>
        <dbReference type="ChEBI" id="CHEBI:29105"/>
        <label>2</label>
    </ligand>
</feature>
<feature type="binding site" evidence="2">
    <location>
        <position position="685"/>
    </location>
    <ligand>
        <name>Cu(2+)</name>
        <dbReference type="ChEBI" id="CHEBI:29036"/>
        <label>2</label>
    </ligand>
</feature>
<feature type="binding site" evidence="2">
    <location>
        <position position="685"/>
    </location>
    <ligand>
        <name>Zn(2+)</name>
        <dbReference type="ChEBI" id="CHEBI:29105"/>
        <label>2</label>
    </ligand>
</feature>
<feature type="site" description="Required for Cu(2+) reduction" evidence="7">
    <location>
        <position position="170"/>
    </location>
</feature>
<feature type="site" description="Cleavage; by caspases" evidence="2">
    <location>
        <begin position="197"/>
        <end position="198"/>
    </location>
</feature>
<feature type="site" description="Cleavage; by caspases" evidence="2">
    <location>
        <begin position="219"/>
        <end position="220"/>
    </location>
</feature>
<feature type="site" description="Reactive bond" evidence="1">
    <location>
        <begin position="301"/>
        <end position="302"/>
    </location>
</feature>
<feature type="site" description="Cleavage; by beta-secretase" evidence="2">
    <location>
        <begin position="671"/>
        <end position="672"/>
    </location>
</feature>
<feature type="site" description="Cleavage; by ACE" evidence="2">
    <location>
        <begin position="678"/>
        <end position="679"/>
    </location>
</feature>
<feature type="site" description="Cleavage; by alpha-secretase" evidence="3">
    <location>
        <begin position="687"/>
        <end position="688"/>
    </location>
</feature>
<feature type="site" description="Cleavage; by theta-secretase" evidence="3">
    <location>
        <begin position="690"/>
        <end position="691"/>
    </location>
</feature>
<feature type="site" description="Implicated in free radical propagation" evidence="1">
    <location>
        <position position="704"/>
    </location>
</feature>
<feature type="site" description="Susceptible to oxidation" evidence="2">
    <location>
        <position position="706"/>
    </location>
</feature>
<feature type="site" description="Cleavage; by gamma-secretase; site 1" evidence="3">
    <location>
        <begin position="711"/>
        <end position="712"/>
    </location>
</feature>
<feature type="site" description="Cleavage; by gamma-secretase; site 2" evidence="2">
    <location>
        <begin position="713"/>
        <end position="714"/>
    </location>
</feature>
<feature type="site" description="Cleavage; by gamma-secretase; site 3" evidence="2">
    <location>
        <begin position="720"/>
        <end position="721"/>
    </location>
</feature>
<feature type="site" description="Cleavage; by a caspase" evidence="2">
    <location>
        <begin position="739"/>
        <end position="740"/>
    </location>
</feature>
<feature type="modified residue" description="Phosphoserine; by CK2" evidence="2">
    <location>
        <position position="198"/>
    </location>
</feature>
<feature type="modified residue" description="Phosphoserine; by CK1" evidence="2">
    <location>
        <position position="206"/>
    </location>
</feature>
<feature type="modified residue" description="Sulfotyrosine" evidence="5">
    <location>
        <position position="217"/>
    </location>
</feature>
<feature type="modified residue" description="Sulfotyrosine" evidence="5">
    <location>
        <position position="262"/>
    </location>
</feature>
<feature type="modified residue" description="Sulfotyrosine" evidence="5">
    <location>
        <position position="336"/>
    </location>
</feature>
<feature type="modified residue" description="Phosphoserine" evidence="2">
    <location>
        <position position="441"/>
    </location>
</feature>
<feature type="modified residue" description="Phosphotyrosine" evidence="2">
    <location>
        <position position="497"/>
    </location>
</feature>
<feature type="modified residue" description="Phosphothreonine" evidence="3">
    <location>
        <position position="729"/>
    </location>
</feature>
<feature type="modified residue" description="Phosphoserine; by APP-kinase I" evidence="3">
    <location>
        <position position="730"/>
    </location>
</feature>
<feature type="modified residue" description="Phosphothreonine; by CDK5 and MAPK10" evidence="2">
    <location>
        <position position="743"/>
    </location>
</feature>
<feature type="modified residue" description="Phosphotyrosine; by ABL1" evidence="4">
    <location>
        <position position="757"/>
    </location>
</feature>
<feature type="glycosylation site" description="N-linked (GlcNAc...) asparagine" evidence="5">
    <location>
        <position position="542"/>
    </location>
</feature>
<feature type="glycosylation site" description="N-linked (GlcNAc...) asparagine" evidence="5">
    <location>
        <position position="571"/>
    </location>
</feature>
<feature type="disulfide bond" evidence="7">
    <location>
        <begin position="38"/>
        <end position="62"/>
    </location>
</feature>
<feature type="disulfide bond" evidence="7">
    <location>
        <begin position="73"/>
        <end position="117"/>
    </location>
</feature>
<feature type="disulfide bond" evidence="7">
    <location>
        <begin position="98"/>
        <end position="105"/>
    </location>
</feature>
<feature type="disulfide bond" evidence="7">
    <location>
        <begin position="133"/>
        <end position="187"/>
    </location>
</feature>
<feature type="disulfide bond" evidence="7">
    <location>
        <begin position="144"/>
        <end position="174"/>
    </location>
</feature>
<feature type="disulfide bond" evidence="7">
    <location>
        <begin position="158"/>
        <end position="186"/>
    </location>
</feature>
<feature type="disulfide bond" evidence="6">
    <location>
        <begin position="291"/>
        <end position="341"/>
    </location>
</feature>
<feature type="disulfide bond" evidence="6">
    <location>
        <begin position="300"/>
        <end position="324"/>
    </location>
</feature>
<feature type="disulfide bond" evidence="6">
    <location>
        <begin position="316"/>
        <end position="337"/>
    </location>
</feature>
<feature type="cross-link" description="Glycyl lysine isopeptide (Lys-Gly) (interchain with G-Cter in ubiquitin)" evidence="3">
    <location>
        <position position="763"/>
    </location>
</feature>
<reference key="1">
    <citation type="journal article" date="2004" name="Cell">
        <title>Accelerated evolution of nervous system genes in the origin of Homo sapiens.</title>
        <authorList>
            <person name="Dorus S."/>
            <person name="Vallender E.J."/>
            <person name="Evans P.D."/>
            <person name="Anderson J.R."/>
            <person name="Gilbert S.L."/>
            <person name="Mahowald M."/>
            <person name="Wyckoff G.J."/>
            <person name="Malcom C.M."/>
            <person name="Lahn B.T."/>
        </authorList>
    </citation>
    <scope>NUCLEOTIDE SEQUENCE [MRNA]</scope>
</reference>
<comment type="function">
    <text evidence="1 2">Functions as a cell surface receptor and performs physiological functions on the surface of neurons relevant to neurite growth, neuronal adhesion and axonogenesis. Interaction between APP molecules on neighboring cells promotes synaptogenesis. Involved in cell mobility and transcription regulation through protein-protein interactions (By similarity). Can promote transcription activation through binding to APBB1-KAT5 and inhibit Notch signaling through interaction with Numb (By similarity). Couples to apoptosis-inducing pathways such as those mediated by G(o) and JIP (By similarity). Inhibits G(o)-alpha ATPase activity (By similarity). Acts as a kinesin I membrane receptor, mediating the axonal transport of beta-secretase and presenilin 1 (By similarity). By acting as a kinesin I membrane receptor, plays a role in axonal anterograde transport of cargo towards synapses in axons (By similarity). May be involved in copper homeostasis/oxidative stress through copper ion reduction (By similarity). In vitro, copper-metallated APP induces neuronal death directly or is potentiated through Cu(2+)-mediated low-density lipoprotein oxidation (By similarity). Can regulate neurite outgrowth through binding to components of the extracellular matrix such as heparin and collagen I and IV. Induces a AGER-dependent pathway that involves activation of p38 MAPK, resulting in internalization of amyloid-beta peptide and mitochondrial dysfunction in cultured cortical neurons. Provides Cu(2+) ions for GPC1 which are required for release of nitric oxide (NO) and subsequent degradation of the heparan sulfate chains on GPC1 (By similarity).</text>
</comment>
<comment type="function">
    <text evidence="1">Amyloid-beta peptides are lipophilic metal chelators with metal-reducing activity. Binds transient metals such as copper, zinc and iron (By similarity).</text>
</comment>
<comment type="function">
    <text evidence="1">The gamma-CTF peptides as well as the caspase-cleaved peptides, including C31, are potent enhancers of neuronal apoptosis.</text>
</comment>
<comment type="subunit">
    <text evidence="2 3 4">Binds, via its C-terminus, to the PID domain of several cytoplasmic proteins, including APBB family members, the APBA family, MAPK8IP1, SHC1 and NUMB and DAB1 (By similarity). Binding to DAB1 inhibits its serine phosphorylation (By similarity). Interacts (via NPXY motif) with DAB2 (via PID domain); the interaction is impaired by tyrosine phosphorylation of the NPXY motif. Also interacts with GPCR-like protein BPP, APPBP1, IB1, KNS2 (via its TPR domains), APPBP2 (via BaSS) and DDB1. In vitro, it binds MAPT via the MT-binding domains (By similarity). Associates with microtubules in the presence of ATP and in a kinesin-dependent manner (By similarity). Interacts, through a C-terminal domain, with GNAO1. Amyloid-beta protein 42 binds CHRNA7 in hippocampal neurons (By similarity). Amyloid-beta associates with HADH2 (By similarity). Interacts with CPEB1, ANKS1B and AGER (By similarity). Interacts with ITM2B. Interacts with ITM2C. Interacts with IDE. Can form homodimers; dimerization is enhanced in the presence of Cu(2+) ions. Can form homodimers; this is promoted by heparin binding (By similarity). Amyloid-beta protein 40 interacts with S100A9 (By similarity). CTF-alpha product of APP interacts with GSAP (By similarity). Interacts with SORL1 (via N-terminal ectodomain); this interaction retains APP in the trans-Golgi network and reduces processing into soluble APP-alpha and amyloid-beta peptides (By similarity). The C99 fragment also interacts with SORL1 (By similarity). Interacts with PLD3 (By similarity). Interacts with VDAC1 (By similarity). Interacts with NSG1; could regulate APP processing (By similarity). Amyloid-beta protein 42 interacts with FPR2 (By similarity). Interacts (via transmembrane region) with PSEN1; the interaction is direct (By similarity). Interacts with LRRK2 (By similarity). Interacts (via cytoplasmic domain) with KIF5B (By similarity). Interacts (via C-terminus) with APBB2/FE65L1 (via C-terminus) (By similarity). Interacts (via intracellular domain) with APBB3 (By similarity).</text>
</comment>
<comment type="subcellular location">
    <subcellularLocation>
        <location evidence="2">Cell membrane</location>
        <topology evidence="2">Single-pass type I membrane protein</topology>
    </subcellularLocation>
    <subcellularLocation>
        <location evidence="2">Membrane</location>
        <topology evidence="2">Single-pass type I membrane protein</topology>
    </subcellularLocation>
    <subcellularLocation>
        <location evidence="2">Perikaryon</location>
    </subcellularLocation>
    <subcellularLocation>
        <location evidence="2">Cell projection</location>
        <location evidence="2">Growth cone</location>
    </subcellularLocation>
    <subcellularLocation>
        <location evidence="2">Membrane</location>
        <location evidence="2">Clathrin-coated pit</location>
    </subcellularLocation>
    <subcellularLocation>
        <location evidence="2">Early endosome</location>
    </subcellularLocation>
    <subcellularLocation>
        <location evidence="2">Cytoplasmic vesicle</location>
    </subcellularLocation>
    <text evidence="2">Cell surface protein that rapidly becomes internalized via clathrin-coated pits. Only a minor proportion is present at the cell membrane; most of the protein is present in intracellular vesicles. During maturation, the immature APP (N-glycosylated in the endoplasmic reticulum) moves to the Golgi complex where complete maturation occurs (O-glycosylated and sulfated). After alpha-secretase cleavage, soluble APP is released into the extracellular space and the C-terminal is internalized to endosomes and lysosomes. Some APP accumulates in secretory transport vesicles leaving the late Golgi compartment and returns to the cell surface. APP sorts to the basolateral surface in epithelial cells. During neuronal differentiation, the Thr-743 phosphorylated form is located mainly in growth cones, moderately in neurites and sparingly in the cell body. Casein kinase phosphorylation can occur either at the cell surface or within a post-Golgi compartment. Associates with GPC1 in perinuclear compartments. Colocalizes with SORL1 in a vesicular pattern in cytoplasm and perinuclear regions.</text>
</comment>
<comment type="subcellular location">
    <molecule>C83</molecule>
    <subcellularLocation>
        <location evidence="2">Endoplasmic reticulum</location>
    </subcellularLocation>
    <subcellularLocation>
        <location evidence="2">Golgi apparatus</location>
    </subcellularLocation>
    <subcellularLocation>
        <location evidence="2">Early endosome</location>
    </subcellularLocation>
</comment>
<comment type="subcellular location">
    <molecule>C99</molecule>
    <subcellularLocation>
        <location evidence="2">Early endosome</location>
    </subcellularLocation>
</comment>
<comment type="subcellular location">
    <molecule>Soluble APP-beta</molecule>
    <subcellularLocation>
        <location evidence="2">Secreted</location>
    </subcellularLocation>
</comment>
<comment type="subcellular location">
    <molecule>Amyloid-beta protein 42</molecule>
    <subcellularLocation>
        <location evidence="2">Cell surface</location>
    </subcellularLocation>
    <text evidence="2">Associates with FPR2 at the cell surface and the complex is then rapidly internalized.</text>
</comment>
<comment type="subcellular location">
    <molecule>Gamma-secretase C-terminal fragment 59</molecule>
    <subcellularLocation>
        <location evidence="2">Nucleus</location>
    </subcellularLocation>
    <subcellularLocation>
        <location evidence="2">Cytoplasm</location>
    </subcellularLocation>
    <text evidence="2 4">Located to both the cytoplasm and nuclei of neurons. It can be translocated to the nucleus through association with APBB1 (Fe65). In dopaminergic neurons, the phosphorylated Thr-743 form is localized to the nucleus (By similarity).</text>
</comment>
<comment type="domain">
    <text evidence="2">The transmembrane helix undergoes a conformation change and unravels partially when bound to PSEN1, facilitating cleavage by PSEN1.</text>
</comment>
<comment type="domain">
    <text evidence="2">The basolateral sorting signal (BaSS) is required for sorting of membrane proteins to the basolateral surface of epithelial cells.</text>
</comment>
<comment type="domain">
    <text evidence="2">The GFLD subdomain binds Cu(2+) ions; this promotes homodimerization.</text>
</comment>
<comment type="domain">
    <text evidence="2">The NPXY sequence motif found in many tyrosine-phosphorylated proteins is required for the specific binding of the PID domain. However, additional amino acids either N- or C-terminal to the NPXY motif are often required for complete interaction. The PID domain-containing proteins which bind APP require the YENPTY motif for full interaction. These interactions are independent of phosphorylation on the terminal tyrosine residue. The YENPXY site is also involved in clathrin-mediated endocytosis.</text>
</comment>
<comment type="domain">
    <text evidence="2">The C-terminal region can bind zinc ions; this favors dimerization and formation of higher oligomers.</text>
</comment>
<comment type="domain">
    <text evidence="2">The OX-2 motif shows some similarity to a region in the N-terminus of CD200/MOX2.</text>
</comment>
<comment type="PTM">
    <text evidence="2">Proteolytically processed under normal cellular conditions. Cleavage either by alpha-secretase, beta-secretase or theta-secretase leads to generation and extracellular release of soluble APP peptides, S-APP-alpha and S-APP-beta, and the retention of corresponding membrane-anchored C-terminal fragments, C80, C83 and C99. Subsequent processing of C80 and C83 by gamma-secretase yields P3 peptides. This is the major secretory pathway and is non-amyloidogenic. Alternatively, presenilin/nicastrin-mediated gamma-secretase processing of C99 releases the amyloid-beta proteins, amyloid-beta protein 40 and amyloid-beta protein 42, major components of amyloid plaques, and the cytotoxic C-terminal fragments, gamma-CTF(50), gamma-CTF(57) and gamma-CTF(59). PSEN1 cleavage is more efficient with C83 than with C99 as substrate (in vitro). Amyloid-beta protein 40 and Amyloid-beta protein 42 are cleaved by ACE. Many other minor amyloid-beta peptides, amyloid-beta 1-X peptides, are found in cerebral spinal fluid (CSF) including the amyloid-beta X-15 peptides, produced from the cleavage by alpha-secretase.</text>
</comment>
<comment type="PTM">
    <text evidence="1">Proteolytically cleaved by caspases during neuronal apoptosis. Cleavage at Asp-739 by either caspase-3, -8 or -9 results in the production of the neurotoxic C31 peptide and the increased production of amyloid-beta peptides.</text>
</comment>
<comment type="PTM">
    <text evidence="2">N- and O-glycosylated.</text>
</comment>
<comment type="PTM">
    <text evidence="2">Phosphorylation in the C-terminal on tyrosine, threonine and serine residues is neuron-specific. Phosphorylation can affect APP processing, neuronal differentiation and interaction with other proteins. Phosphorylated on Thr-743 in neuronal cells by Cdc5 kinase and Mapk10, in dividing cells by Cdc2 kinase in a cell-cycle dependent manner with maximal levels at the G2/M phase and, in vitro, by GSK-3-beta. The Thr-743 phosphorylated form causes a conformational change which reduces binding of Fe65 family members. In dopaminergic (DA) neurons, phosphorylation on Thr-743 by LRKK2 promotes the production and the nuclear translocation of the APP intracellular domain (AICD) which induces DA neuron apoptosis. Phosphorylation on Tyr-757 is required for SHC binding. Phosphorylated in the extracellular domain by casein kinases on both soluble and membrane-bound APP. This phosphorylation is inhibited by heparin.</text>
</comment>
<comment type="PTM">
    <text evidence="1">Trophic-factor deprivation triggers the cleavage of surface APP by beta-secretase to release sAPP-beta which is further cleaved to release an N-terminal fragment of APP (N-APP).</text>
</comment>
<comment type="PTM">
    <text evidence="4">Amyloid-beta peptides are degraded by IDE.</text>
</comment>
<comment type="PTM">
    <text evidence="2">Sulfated on tyrosine residues.</text>
</comment>
<comment type="miscellaneous">
    <text evidence="2">Chelation of metal ions, notably copper, iron and zinc, can induce histidine-bridging between amyloid-beta molecules resulting in amyloid-beta-metal aggregates. Extracellular zinc-binding increases binding of heparin to APP and inhibits collagen-binding.</text>
</comment>
<comment type="similarity">
    <text evidence="7">Belongs to the APP family.</text>
</comment>
<accession>Q5IS80</accession>
<proteinExistence type="evidence at transcript level"/>
<keyword id="KW-0034">Amyloid</keyword>
<keyword id="KW-0053">Apoptosis</keyword>
<keyword id="KW-0130">Cell adhesion</keyword>
<keyword id="KW-1003">Cell membrane</keyword>
<keyword id="KW-0966">Cell projection</keyword>
<keyword id="KW-0168">Coated pit</keyword>
<keyword id="KW-0186">Copper</keyword>
<keyword id="KW-0963">Cytoplasm</keyword>
<keyword id="KW-0968">Cytoplasmic vesicle</keyword>
<keyword id="KW-1015">Disulfide bond</keyword>
<keyword id="KW-0254">Endocytosis</keyword>
<keyword id="KW-0256">Endoplasmic reticulum</keyword>
<keyword id="KW-0967">Endosome</keyword>
<keyword id="KW-0325">Glycoprotein</keyword>
<keyword id="KW-0333">Golgi apparatus</keyword>
<keyword id="KW-0358">Heparin-binding</keyword>
<keyword id="KW-0408">Iron</keyword>
<keyword id="KW-1017">Isopeptide bond</keyword>
<keyword id="KW-0472">Membrane</keyword>
<keyword id="KW-0479">Metal-binding</keyword>
<keyword id="KW-0914">Notch signaling pathway</keyword>
<keyword id="KW-0539">Nucleus</keyword>
<keyword id="KW-0597">Phosphoprotein</keyword>
<keyword id="KW-0646">Protease inhibitor</keyword>
<keyword id="KW-0654">Proteoglycan</keyword>
<keyword id="KW-1185">Reference proteome</keyword>
<keyword id="KW-0964">Secreted</keyword>
<keyword id="KW-0722">Serine protease inhibitor</keyword>
<keyword id="KW-0732">Signal</keyword>
<keyword id="KW-0765">Sulfation</keyword>
<keyword id="KW-0812">Transmembrane</keyword>
<keyword id="KW-1133">Transmembrane helix</keyword>
<keyword id="KW-0832">Ubl conjugation</keyword>
<keyword id="KW-0862">Zinc</keyword>
<sequence>MLPGLALLLLAAWTARALEVPTDGNAGLLAEPQIAMFCGRLNMHMNVQNGKWDSDPSGTKTCIDTKEGILQYCQEVYPELQITNVVEANQPVTIQNWCKRGRKQCKTHPHFVIPYRCLVGEFVSDALLVPDKCKFLHQERMDVCETHLHWHTVAKETCSEKSTNLHDYGMLLPCGIDKFRGVEFVCCPLAEESDNVDSADAEEDDSDVWWGGADTDYADGSEDKVVEVAEEEEVAEVEEEEADDDEDDEDGDEVEEEAEEPYEEATERTTSIATTTTTTTESVEEVVREVCSEQAETGPCRAMISRWYFDVTEGKCAPFFYGGCGGNRNNFDTEEYCMAVCGSVMSQSLLKTTQEPLARDPVKLPTTAASTPDAVDKYLETPGDENEHAHFQKAKERLEAKHRERMSQVMREWEEAERQAKNLPKADKKAVIQHFQEKVESLEQEAANERQQLVETHMARVEAMLNDRRRLALENYITALQAVPPRPRHVFNMLKKYVRAEQKDRQHTLKHFEHVRMVDPKKAAQIRSQVMTHLRVIYERMNQSLSLLYNVPAVAEEIQDEVDELLQKEQNYSDDVLANMISEPRISYGNDALMPSLTETKTTVELLPVNGEFSLDDLQPWHSFGADSVPANTENEVEPVDARPAADRGLTTRPGSGLTNIKTEEISEVKMDAEFRHDSGYEVHHQKLVFFAEDVGSNKGAIIGLMVGGVVIATVIVITLVMLKKKQYTSIHHGVVEVDAAVTPEERHLSKMQQNGYENPTYKFFEQMQN</sequence>